<name>GPC6A_CARAU</name>
<accession>Q9PW88</accession>
<evidence type="ECO:0000250" key="1">
    <source>
        <dbReference type="UniProtKB" id="Q8K4Z6"/>
    </source>
</evidence>
<evidence type="ECO:0000255" key="2"/>
<evidence type="ECO:0000269" key="3">
    <source>
    </source>
</evidence>
<evidence type="ECO:0000269" key="4">
    <source>
    </source>
</evidence>
<evidence type="ECO:0000269" key="5">
    <source>
    </source>
</evidence>
<evidence type="ECO:0000305" key="6"/>
<protein>
    <recommendedName>
        <fullName>G-protein coupled receptor family C group 6 member A</fullName>
    </recommendedName>
    <alternativeName>
        <fullName>Odorant receptor 5.24</fullName>
    </alternativeName>
</protein>
<comment type="function">
    <text evidence="3">Olfactory receptor that is activated by amino acids that act as potent odorants in fish. Most highly activated by basic amino acids such as L-lysine and L-arginine.</text>
</comment>
<comment type="subunit">
    <text evidence="1">Homodimer; disulfide-linked.</text>
</comment>
<comment type="subcellular location">
    <subcellularLocation>
        <location evidence="1">Cell membrane</location>
        <topology evidence="1">Multi-pass membrane protein</topology>
    </subcellularLocation>
</comment>
<comment type="tissue specificity">
    <text evidence="3">Expressed in olfactory epithelium. Also expressed in gills, tongue, lips and palatal organ. Not expressed in brain, kidney, liver, muscle, intestine, ovary and skin. In olfactory epithelium, it is widely expressed over the apical and medial portions of the olfactory sensory neurons, regions that contain olfactory neurons. Expressed in external epithelia, which contains taste buds and solitary chemosensory cells. On gill rakers, it is widely expressed in the surface epithelium, but excluded from taste buds.</text>
</comment>
<comment type="similarity">
    <text evidence="6">Belongs to the G-protein coupled receptor 3 family.</text>
</comment>
<gene>
    <name type="primary">gprc6a</name>
</gene>
<keyword id="KW-1003">Cell membrane</keyword>
<keyword id="KW-1015">Disulfide bond</keyword>
<keyword id="KW-0297">G-protein coupled receptor</keyword>
<keyword id="KW-0325">Glycoprotein</keyword>
<keyword id="KW-0472">Membrane</keyword>
<keyword id="KW-0552">Olfaction</keyword>
<keyword id="KW-0675">Receptor</keyword>
<keyword id="KW-1185">Reference proteome</keyword>
<keyword id="KW-0716">Sensory transduction</keyword>
<keyword id="KW-0732">Signal</keyword>
<keyword id="KW-0807">Transducer</keyword>
<keyword id="KW-0812">Transmembrane</keyword>
<keyword id="KW-1133">Transmembrane helix</keyword>
<dbReference type="EMBL" id="AF158963">
    <property type="protein sequence ID" value="AAD46570.2"/>
    <property type="molecule type" value="mRNA"/>
</dbReference>
<dbReference type="SMR" id="Q9PW88"/>
<dbReference type="TCDB" id="9.A.14.7.7">
    <property type="family name" value="the g-protein-coupled receptor (gpcr) family"/>
</dbReference>
<dbReference type="GlyCosmos" id="Q9PW88">
    <property type="glycosylation" value="14 sites, No reported glycans"/>
</dbReference>
<dbReference type="Proteomes" id="UP000515129">
    <property type="component" value="Unplaced"/>
</dbReference>
<dbReference type="GO" id="GO:0005886">
    <property type="term" value="C:plasma membrane"/>
    <property type="evidence" value="ECO:0000250"/>
    <property type="project" value="UniProtKB"/>
</dbReference>
<dbReference type="GO" id="GO:0004930">
    <property type="term" value="F:G protein-coupled receptor activity"/>
    <property type="evidence" value="ECO:0007669"/>
    <property type="project" value="UniProtKB-KW"/>
</dbReference>
<dbReference type="GO" id="GO:0007608">
    <property type="term" value="P:sensory perception of smell"/>
    <property type="evidence" value="ECO:0007669"/>
    <property type="project" value="UniProtKB-KW"/>
</dbReference>
<dbReference type="CDD" id="cd06361">
    <property type="entry name" value="PBP1_GPC6A-like"/>
    <property type="match status" value="1"/>
</dbReference>
<dbReference type="FunFam" id="3.40.50.2300:FF:000152">
    <property type="entry name" value="G protein-coupled receptor class C group 6 member A"/>
    <property type="match status" value="1"/>
</dbReference>
<dbReference type="FunFam" id="2.10.50.30:FF:000004">
    <property type="entry name" value="Taste receptor type 1 member 3-like protein"/>
    <property type="match status" value="1"/>
</dbReference>
<dbReference type="Gene3D" id="3.40.50.2300">
    <property type="match status" value="2"/>
</dbReference>
<dbReference type="Gene3D" id="2.10.50.30">
    <property type="entry name" value="GPCR, family 3, nine cysteines domain"/>
    <property type="match status" value="1"/>
</dbReference>
<dbReference type="InterPro" id="IPR001828">
    <property type="entry name" value="ANF_lig-bd_rcpt"/>
</dbReference>
<dbReference type="InterPro" id="IPR000337">
    <property type="entry name" value="GPCR_3"/>
</dbReference>
<dbReference type="InterPro" id="IPR011500">
    <property type="entry name" value="GPCR_3_9-Cys_dom"/>
</dbReference>
<dbReference type="InterPro" id="IPR038550">
    <property type="entry name" value="GPCR_3_9-Cys_sf"/>
</dbReference>
<dbReference type="InterPro" id="IPR017978">
    <property type="entry name" value="GPCR_3_C"/>
</dbReference>
<dbReference type="InterPro" id="IPR000068">
    <property type="entry name" value="GPCR_3_Ca_sens_rcpt-rel"/>
</dbReference>
<dbReference type="InterPro" id="IPR017979">
    <property type="entry name" value="GPCR_3_CS"/>
</dbReference>
<dbReference type="InterPro" id="IPR028082">
    <property type="entry name" value="Peripla_BP_I"/>
</dbReference>
<dbReference type="PANTHER" id="PTHR24061">
    <property type="entry name" value="CALCIUM-SENSING RECEPTOR-RELATED"/>
    <property type="match status" value="1"/>
</dbReference>
<dbReference type="PANTHER" id="PTHR24061:SF5">
    <property type="entry name" value="G-PROTEIN COUPLED RECEPTOR FAMILY C GROUP 6 MEMBER A"/>
    <property type="match status" value="1"/>
</dbReference>
<dbReference type="Pfam" id="PF00003">
    <property type="entry name" value="7tm_3"/>
    <property type="match status" value="1"/>
</dbReference>
<dbReference type="Pfam" id="PF01094">
    <property type="entry name" value="ANF_receptor"/>
    <property type="match status" value="1"/>
</dbReference>
<dbReference type="Pfam" id="PF07562">
    <property type="entry name" value="NCD3G"/>
    <property type="match status" value="1"/>
</dbReference>
<dbReference type="PRINTS" id="PR00592">
    <property type="entry name" value="CASENSINGR"/>
</dbReference>
<dbReference type="PRINTS" id="PR00248">
    <property type="entry name" value="GPCRMGR"/>
</dbReference>
<dbReference type="SUPFAM" id="SSF53822">
    <property type="entry name" value="Periplasmic binding protein-like I"/>
    <property type="match status" value="1"/>
</dbReference>
<dbReference type="PROSITE" id="PS00980">
    <property type="entry name" value="G_PROTEIN_RECEP_F3_2"/>
    <property type="match status" value="1"/>
</dbReference>
<dbReference type="PROSITE" id="PS50259">
    <property type="entry name" value="G_PROTEIN_RECEP_F3_4"/>
    <property type="match status" value="1"/>
</dbReference>
<reference key="1">
    <citation type="journal article" date="1999" name="Neuron">
        <title>Functional identification of a goldfish odorant receptor.</title>
        <authorList>
            <person name="Speca D.J."/>
            <person name="Lin D.M."/>
            <person name="Sorensen P.W."/>
            <person name="Isacoff E.Y."/>
            <person name="Ngai J."/>
            <person name="Dittman A.H."/>
        </authorList>
    </citation>
    <scope>NUCLEOTIDE SEQUENCE [MRNA]</scope>
    <scope>FUNCTION</scope>
    <scope>TISSUE SPECIFICITY</scope>
</reference>
<reference key="2">
    <citation type="journal article" date="2003" name="J. Biol. Chem.">
        <title>Molecular similarities in the ligand binding pockets of an odorant receptor and the metabotropic glutamate receptors.</title>
        <authorList>
            <person name="Kuang D."/>
            <person name="Yao Y."/>
            <person name="Wang M."/>
            <person name="Pattabiraman N."/>
            <person name="Kotra L.P."/>
            <person name="Hampson D.R."/>
        </authorList>
    </citation>
    <scope>MUTAGENESIS OF LYS-74; GLN-78; SER-111; SER-111; SER-151; SER-152; THR-175; ARG-190; ASP-195; TYR-223; LYS-283; SER-284; SER-285; ASP-309 AND ASP-388</scope>
</reference>
<reference key="3">
    <citation type="journal article" date="2004" name="J. Neurosci.">
        <title>Molecular determinants of ligand selectivity in a vertebrate odorant receptor.</title>
        <authorList>
            <person name="Luu P."/>
            <person name="Acher F."/>
            <person name="Bertrand H.-O."/>
            <person name="Fan J."/>
            <person name="Ngai J."/>
        </authorList>
    </citation>
    <scope>MUTAGENESIS OF GLU-47; SER-152; THR-175; TYR-223; ASP-309; ASP-388 AND MET-389</scope>
</reference>
<feature type="signal peptide" evidence="2">
    <location>
        <begin position="1"/>
        <end position="24"/>
    </location>
</feature>
<feature type="chain" id="PRO_0000043200" description="G-protein coupled receptor family C group 6 member A">
    <location>
        <begin position="25"/>
        <end position="877"/>
    </location>
</feature>
<feature type="topological domain" description="Extracellular" evidence="2">
    <location>
        <begin position="25"/>
        <end position="567"/>
    </location>
</feature>
<feature type="transmembrane region" description="Helical" evidence="2">
    <location>
        <begin position="568"/>
        <end position="588"/>
    </location>
</feature>
<feature type="topological domain" description="Cytoplasmic" evidence="2">
    <location>
        <begin position="589"/>
        <end position="603"/>
    </location>
</feature>
<feature type="transmembrane region" description="Helical" evidence="2">
    <location>
        <begin position="604"/>
        <end position="624"/>
    </location>
</feature>
<feature type="topological domain" description="Extracellular" evidence="2">
    <location>
        <begin position="625"/>
        <end position="635"/>
    </location>
</feature>
<feature type="transmembrane region" description="Helical" evidence="2">
    <location>
        <begin position="636"/>
        <end position="656"/>
    </location>
</feature>
<feature type="topological domain" description="Cytoplasmic" evidence="2">
    <location>
        <begin position="657"/>
        <end position="676"/>
    </location>
</feature>
<feature type="transmembrane region" description="Helical" evidence="2">
    <location>
        <begin position="677"/>
        <end position="697"/>
    </location>
</feature>
<feature type="topological domain" description="Extracellular" evidence="2">
    <location>
        <begin position="698"/>
        <end position="720"/>
    </location>
</feature>
<feature type="transmembrane region" description="Helical" evidence="2">
    <location>
        <begin position="721"/>
        <end position="741"/>
    </location>
</feature>
<feature type="topological domain" description="Cytoplasmic" evidence="2">
    <location>
        <begin position="742"/>
        <end position="755"/>
    </location>
</feature>
<feature type="transmembrane region" description="Helical" evidence="2">
    <location>
        <begin position="756"/>
        <end position="776"/>
    </location>
</feature>
<feature type="topological domain" description="Extracellular" evidence="2">
    <location>
        <begin position="777"/>
        <end position="782"/>
    </location>
</feature>
<feature type="transmembrane region" description="Helical" evidence="2">
    <location>
        <begin position="783"/>
        <end position="803"/>
    </location>
</feature>
<feature type="topological domain" description="Cytoplasmic" evidence="2">
    <location>
        <begin position="804"/>
        <end position="877"/>
    </location>
</feature>
<feature type="binding site">
    <location>
        <position position="388"/>
    </location>
    <ligand>
        <name>L-lysine</name>
        <dbReference type="ChEBI" id="CHEBI:32551"/>
    </ligand>
</feature>
<feature type="site" description="Important for basic amino acid selectivity">
    <location>
        <position position="389"/>
    </location>
</feature>
<feature type="glycosylation site" description="N-linked (GlcNAc...) asparagine" evidence="2">
    <location>
        <position position="53"/>
    </location>
</feature>
<feature type="glycosylation site" description="N-linked (GlcNAc...) asparagine" evidence="2">
    <location>
        <position position="99"/>
    </location>
</feature>
<feature type="glycosylation site" description="N-linked (GlcNAc...) asparagine" evidence="2">
    <location>
        <position position="135"/>
    </location>
</feature>
<feature type="glycosylation site" description="N-linked (GlcNAc...) asparagine" evidence="2">
    <location>
        <position position="263"/>
    </location>
</feature>
<feature type="glycosylation site" description="N-linked (GlcNAc...) asparagine" evidence="2">
    <location>
        <position position="310"/>
    </location>
</feature>
<feature type="glycosylation site" description="N-linked (GlcNAc...) asparagine" evidence="2">
    <location>
        <position position="322"/>
    </location>
</feature>
<feature type="glycosylation site" description="N-linked (GlcNAc...) asparagine" evidence="2">
    <location>
        <position position="338"/>
    </location>
</feature>
<feature type="glycosylation site" description="N-linked (GlcNAc...) asparagine" evidence="2">
    <location>
        <position position="358"/>
    </location>
</feature>
<feature type="glycosylation site" description="N-linked (GlcNAc...) asparagine" evidence="2">
    <location>
        <position position="430"/>
    </location>
</feature>
<feature type="glycosylation site" description="N-linked (GlcNAc...) asparagine" evidence="2">
    <location>
        <position position="475"/>
    </location>
</feature>
<feature type="glycosylation site" description="N-linked (GlcNAc...) asparagine" evidence="2">
    <location>
        <position position="484"/>
    </location>
</feature>
<feature type="glycosylation site" description="N-linked (GlcNAc...) asparagine" evidence="2">
    <location>
        <position position="528"/>
    </location>
</feature>
<feature type="glycosylation site" description="N-linked (GlcNAc...) asparagine" evidence="2">
    <location>
        <position position="548"/>
    </location>
</feature>
<feature type="glycosylation site" description="N-linked (GlcNAc...) asparagine" evidence="2">
    <location>
        <position position="628"/>
    </location>
</feature>
<feature type="mutagenesis site" description="Induces a mild reduction in ligand-affinity." evidence="5">
    <original>E</original>
    <variation>L</variation>
    <variation>K</variation>
    <location>
        <position position="47"/>
    </location>
</feature>
<feature type="mutagenesis site" description="No effect." evidence="4">
    <original>K</original>
    <variation>A</variation>
    <location>
        <position position="74"/>
    </location>
</feature>
<feature type="mutagenesis site" description="Induces reduction in ligand-affinity." evidence="4">
    <original>Q</original>
    <variation>A</variation>
    <location>
        <position position="78"/>
    </location>
</feature>
<feature type="mutagenesis site" description="No effect." evidence="4">
    <original>S</original>
    <variation>A</variation>
    <location>
        <position position="111"/>
    </location>
</feature>
<feature type="mutagenesis site" description="No effect.">
    <original>S</original>
    <variation>A</variation>
    <location>
        <position position="150"/>
    </location>
</feature>
<feature type="mutagenesis site" description="No effect." evidence="4">
    <original>S</original>
    <variation>A</variation>
    <location>
        <position position="151"/>
    </location>
</feature>
<feature type="mutagenesis site" description="Induces reduction in ligand-affinity." evidence="4 5">
    <original>S</original>
    <variation>A</variation>
    <location>
        <position position="152"/>
    </location>
</feature>
<feature type="mutagenesis site" description="Almost abolishes L-Lys- and L-Arg-affinity." evidence="4 5">
    <original>T</original>
    <variation>A</variation>
    <variation>S</variation>
    <location>
        <position position="175"/>
    </location>
</feature>
<feature type="mutagenesis site" description="Induces reduction in ligand-affinity." evidence="4">
    <original>R</original>
    <variation>A</variation>
    <location>
        <position position="190"/>
    </location>
</feature>
<feature type="mutagenesis site" description="Abolishes L-Lys-affinity." evidence="4">
    <original>D</original>
    <variation>A</variation>
    <location>
        <position position="195"/>
    </location>
</feature>
<feature type="mutagenesis site" description="Abolishes L-Lys-affinity and strongly reduces L-Arg-affinity." evidence="4 5">
    <original>Y</original>
    <variation>A</variation>
    <location>
        <position position="223"/>
    </location>
</feature>
<feature type="mutagenesis site" description="Almost abolishes L-Arg-affinity." evidence="4 5">
    <original>Y</original>
    <variation>H</variation>
    <variation>F</variation>
    <location>
        <position position="223"/>
    </location>
</feature>
<feature type="mutagenesis site" description="Abolishes L-Lys-affinity." evidence="4">
    <original>K</original>
    <variation>A</variation>
    <location>
        <position position="283"/>
    </location>
</feature>
<feature type="mutagenesis site" description="No effect." evidence="4">
    <original>S</original>
    <variation>A</variation>
    <location>
        <position position="284"/>
    </location>
</feature>
<feature type="mutagenesis site" description="No effect." evidence="4">
    <original>S</original>
    <variation>A</variation>
    <location>
        <position position="285"/>
    </location>
</feature>
<feature type="mutagenesis site" description="Almost abolishes L-Lys-affinity." evidence="4 5">
    <original>D</original>
    <variation>A</variation>
    <location>
        <position position="309"/>
    </location>
</feature>
<feature type="mutagenesis site" description="Almost abolishes L-Arg-affinity." evidence="4 5">
    <original>D</original>
    <variation>L</variation>
    <location>
        <position position="309"/>
    </location>
</feature>
<feature type="mutagenesis site" description="Induces a 26-fold reduction in L-Lys-affinity without affecting affinity for L-Gln." evidence="4 5">
    <original>D</original>
    <variation>A</variation>
    <location>
        <position position="388"/>
    </location>
</feature>
<feature type="mutagenesis site" description="Induces a 24-fold reduction in L-Lys-affinity but increases affinity for L-Glu." evidence="5">
    <original>M</original>
    <variation>K</variation>
    <location>
        <position position="389"/>
    </location>
</feature>
<organism>
    <name type="scientific">Carassius auratus</name>
    <name type="common">Goldfish</name>
    <dbReference type="NCBI Taxonomy" id="7957"/>
    <lineage>
        <taxon>Eukaryota</taxon>
        <taxon>Metazoa</taxon>
        <taxon>Chordata</taxon>
        <taxon>Craniata</taxon>
        <taxon>Vertebrata</taxon>
        <taxon>Euteleostomi</taxon>
        <taxon>Actinopterygii</taxon>
        <taxon>Neopterygii</taxon>
        <taxon>Teleostei</taxon>
        <taxon>Ostariophysi</taxon>
        <taxon>Cypriniformes</taxon>
        <taxon>Cyprinidae</taxon>
        <taxon>Cyprininae</taxon>
        <taxon>Carassius</taxon>
    </lineage>
</organism>
<sequence>MAGLDLSLVLMLSVLAGVREVSLTQVNQQGVIAPGDIIIGGLFPIHEAAEAVNFTGLNSFSSFQHPVCNRYYTKGLNQALAMIHAVEMANQSPMLSSLNLTLGYRIYDTCSDVTTALWAVQDLTRPYSYCDSQTNSSQPVQPIMAVIGPSSSEISIAVARELNLLMIPQISYASTATILSDKSRFPAFMRTVPNDEYQTHAMVQLLKDNKWTWVGIIITDGDYGRSAMESFVKHTEREGICVAFKVILPDSLADEQKLNIHINETVDIIEKNTKVNVVVSFAKSSQMKLLYEGLRSRNVPKNKVWVASDNWSTSKNILKDVNLSDIGNILGFTFKSGNVTAFLQYLKDLKFGSEAKMNNSFLEEFLKLPEIGNAANAVQEQIKNTHLDMVFSVQMAVSAIAKAVVELCVERQCKTPSAIQPWELLKQLRNVTFEKEGVMYNFDANGDINLGYDVCLWDDDESEKNDIIAEYYPSNSSFTFTRKNLSNIENVLSKCSDSCQPGEYKKTAEGQHTCCYECLACAENQYSNHTDADTCSKCDTESLWSNANSSKCYPKFYEYFEWNSGFAIALLTLAALGILLLISMSALFFWQRNSLVVKAAGGPLCHLILFSLLGSFISVIFFVGEPSNESCRVRQVIFGLSFTLCVSCILVKSLKILLAFQMNLELKELLRKLYKPYVIVCMCMGLQVTICTLWLTLHRPFIEKVVQPKSILLECNEGSDLMFGLMLGYIVLLALICFTFAYKGRKLPQKYNEAKFITFGMLIYLMAWVIFIPVHVTTSGKYVPAVEVVVILISNYGILSCHFLPKCYIIIFKKEYNTKDAFLKNVFEYARKSSENIRGLSGTDPHSKTDNSVYVISNPSLVPEEKQVSVPEIDNVL</sequence>
<proteinExistence type="evidence at protein level"/>